<comment type="function">
    <text evidence="7 8 9 10">Positively regulates the transcription of the maltose regulon whose gene products are responsible for uptake and catabolism of malto-oligosaccharides (PubMed:2524384, PubMed:2538630, PubMed:3305511, PubMed:7040340). Specifically binds to the promoter region of its target genes, recognizing a short DNA motif called the MalT box (5'-GGA[TG]GA-3') (PubMed:2524384, PubMed:2538630). Displays weak ATPase activity, but this activity is not required for promoter binding (PubMed:2524384).</text>
</comment>
<comment type="activity regulation">
    <text evidence="3 5 7 9 12">Activated by ATP and maltotriose, which are both required for DNA binding (PubMed:2524384, PubMed:3305511). Negatively regulated by MalY, MalK and Aes, which bind to MalT and block maltotriose activation (PubMed:10692154, PubMed:11867639, PubMed:9822819).</text>
</comment>
<comment type="subunit">
    <text evidence="2 3 5 9 12">Monomer in solution (PubMed:10559195, PubMed:3305511). Oligomerizes to an active state in the presence of the positive effectors ATP and maltotriose (PubMed:10559195). Interacts with MalY, MalK and Aes, all of which negatively regulate MalT activity by antagonizing maltotriose binding (PubMed:10692154, PubMed:11867639, PubMed:9822819).</text>
</comment>
<comment type="interaction">
    <interactant intactId="EBI-542934">
        <id>P06993</id>
    </interactant>
    <interactant intactId="EBI-545285">
        <id>P08622</id>
        <label>dnaJ</label>
    </interactant>
    <organismsDiffer>false</organismsDiffer>
    <experiments>5</experiments>
</comment>
<comment type="interaction">
    <interactant intactId="EBI-542934">
        <id>P06993</id>
    </interactant>
    <interactant intactId="EBI-554030">
        <id>P31574</id>
        <label>fixB</label>
    </interactant>
    <organismsDiffer>false</organismsDiffer>
    <experiments>3</experiments>
</comment>
<comment type="interaction">
    <interactant intactId="EBI-542934">
        <id>P06993</id>
    </interactant>
    <interactant intactId="EBI-554036">
        <id>P52613</id>
        <label>fliJ</label>
    </interactant>
    <organismsDiffer>false</organismsDiffer>
    <experiments>3</experiments>
</comment>
<comment type="interaction">
    <interactant intactId="EBI-542934">
        <id>P06993</id>
    </interactant>
    <interactant intactId="EBI-562824">
        <id>P0ACG8</id>
        <label>hslR</label>
    </interactant>
    <organismsDiffer>false</organismsDiffer>
    <experiments>2</experiments>
</comment>
<comment type="interaction">
    <interactant intactId="EBI-542934">
        <id>P06993</id>
    </interactant>
    <interactant intactId="EBI-542934">
        <id>P06993</id>
        <label>malT</label>
    </interactant>
    <organismsDiffer>false</organismsDiffer>
    <experiments>4</experiments>
</comment>
<comment type="interaction">
    <interactant intactId="EBI-542934">
        <id>P06993</id>
    </interactant>
    <interactant intactId="EBI-1124666">
        <id>P23256</id>
        <label>malY</label>
    </interactant>
    <organismsDiffer>false</organismsDiffer>
    <experiments>3</experiments>
</comment>
<comment type="interaction">
    <interactant intactId="EBI-542934">
        <id>P06993</id>
    </interactant>
    <interactant intactId="EBI-559071">
        <id>P36979</id>
        <label>rlmN</label>
    </interactant>
    <organismsDiffer>false</organismsDiffer>
    <experiments>3</experiments>
</comment>
<comment type="induction">
    <text evidence="10 11">Expression is induced by the cAMP-activated global transcriptional regulator CRP (PubMed:7040340). Repressed by the Mlc transcriptional repressor (PubMed:9484893).</text>
</comment>
<comment type="domain">
    <text evidence="4 6">Consists of four structural domains: the ATP binding site resides in domain I (DT1); DT3 binds the positive effector maltotriose with a low affinity, and the binding affinity is increased in the presence of DT2; the C-terminal domain DT4 contains the helix-turn-helix DNA binding motif. DT1 also contains the region that interacts with MalY (but not with MalK), and the binding site for Aes is also likely to be contained in the N-terminal portion of MalT encompassing DT1 and DT2 (PubMed:12003949). Domain DT3 may mediate oligomerization (PubMed:11709169).</text>
</comment>
<comment type="miscellaneous">
    <text evidence="17">A study on malT mutants has shown that some of them became nearly completely resistant to Aes repression while still being sensitive to MalY. These mutations are located at positions 38, 220, 243, and 359, most likely defining the interaction patch with Aes on the three-dimensional structure of MalT.</text>
</comment>
<comment type="similarity">
    <text evidence="1 15">Belongs to the MalT family.</text>
</comment>
<feature type="chain" id="PRO_0000184163" description="HTH-type transcriptional regulator MalT">
    <location>
        <begin position="1"/>
        <end position="901"/>
    </location>
</feature>
<feature type="domain" description="HTH luxR-type" evidence="1">
    <location>
        <begin position="829"/>
        <end position="894"/>
    </location>
</feature>
<feature type="DNA-binding region" description="H-T-H motif" evidence="1">
    <location>
        <begin position="853"/>
        <end position="872"/>
    </location>
</feature>
<feature type="region of interest" description="DT1" evidence="17">
    <location>
        <begin position="1"/>
        <end position="241"/>
    </location>
</feature>
<feature type="region of interest" description="DT2" evidence="17">
    <location>
        <begin position="242"/>
        <end position="436"/>
    </location>
</feature>
<feature type="region of interest" description="DT3" evidence="16 17">
    <location>
        <begin position="437"/>
        <end position="806"/>
    </location>
</feature>
<feature type="region of interest" description="DT4" evidence="17">
    <location>
        <begin position="807"/>
        <end position="901"/>
    </location>
</feature>
<feature type="binding site" evidence="1">
    <location>
        <begin position="39"/>
        <end position="46"/>
    </location>
    <ligand>
        <name>ATP</name>
        <dbReference type="ChEBI" id="CHEBI:30616"/>
    </ligand>
</feature>
<feature type="sequence conflict" description="In Ref. 1; AAA83888/AAA58216." evidence="15" ref="1">
    <original>KQ</original>
    <variation>NE</variation>
    <location>
        <begin position="192"/>
        <end position="193"/>
    </location>
</feature>
<feature type="helix" evidence="19">
    <location>
        <begin position="4"/>
        <end position="6"/>
    </location>
</feature>
<feature type="helix" evidence="19">
    <location>
        <begin position="20"/>
        <end position="27"/>
    </location>
</feature>
<feature type="helix" evidence="19">
    <location>
        <begin position="28"/>
        <end position="31"/>
    </location>
</feature>
<feature type="strand" evidence="19">
    <location>
        <begin position="32"/>
        <end position="38"/>
    </location>
</feature>
<feature type="helix" evidence="19">
    <location>
        <begin position="45"/>
        <end position="53"/>
    </location>
</feature>
<feature type="strand" evidence="19">
    <location>
        <begin position="57"/>
        <end position="63"/>
    </location>
</feature>
<feature type="helix" evidence="19">
    <location>
        <begin position="66"/>
        <end position="69"/>
    </location>
</feature>
<feature type="helix" evidence="19">
    <location>
        <begin position="71"/>
        <end position="86"/>
    </location>
</feature>
<feature type="helix" evidence="19">
    <location>
        <begin position="91"/>
        <end position="99"/>
    </location>
</feature>
<feature type="helix" evidence="19">
    <location>
        <begin position="105"/>
        <end position="118"/>
    </location>
</feature>
<feature type="strand" evidence="19">
    <location>
        <begin position="123"/>
        <end position="128"/>
    </location>
</feature>
<feature type="helix" evidence="19">
    <location>
        <begin position="130"/>
        <end position="132"/>
    </location>
</feature>
<feature type="helix" evidence="19">
    <location>
        <begin position="136"/>
        <end position="148"/>
    </location>
</feature>
<feature type="strand" evidence="19">
    <location>
        <begin position="153"/>
        <end position="161"/>
    </location>
</feature>
<feature type="helix" evidence="19">
    <location>
        <begin position="167"/>
        <end position="172"/>
    </location>
</feature>
<feature type="strand" evidence="19">
    <location>
        <begin position="176"/>
        <end position="179"/>
    </location>
</feature>
<feature type="helix" evidence="19">
    <location>
        <begin position="181"/>
        <end position="184"/>
    </location>
</feature>
<feature type="helix" evidence="19">
    <location>
        <begin position="188"/>
        <end position="198"/>
    </location>
</feature>
<feature type="helix" evidence="19">
    <location>
        <begin position="205"/>
        <end position="214"/>
    </location>
</feature>
<feature type="turn" evidence="19">
    <location>
        <begin position="215"/>
        <end position="217"/>
    </location>
</feature>
<feature type="helix" evidence="19">
    <location>
        <begin position="219"/>
        <end position="230"/>
    </location>
</feature>
<feature type="helix" evidence="19">
    <location>
        <begin position="236"/>
        <end position="243"/>
    </location>
</feature>
<feature type="helix" evidence="19">
    <location>
        <begin position="248"/>
        <end position="258"/>
    </location>
</feature>
<feature type="turn" evidence="19">
    <location>
        <begin position="259"/>
        <end position="262"/>
    </location>
</feature>
<feature type="helix" evidence="19">
    <location>
        <begin position="265"/>
        <end position="274"/>
    </location>
</feature>
<feature type="strand" evidence="19">
    <location>
        <begin position="278"/>
        <end position="280"/>
    </location>
</feature>
<feature type="helix" evidence="19">
    <location>
        <begin position="282"/>
        <end position="288"/>
    </location>
</feature>
<feature type="helix" evidence="19">
    <location>
        <begin position="294"/>
        <end position="304"/>
    </location>
</feature>
<feature type="strand" evidence="19">
    <location>
        <begin position="306"/>
        <end position="312"/>
    </location>
</feature>
<feature type="strand" evidence="19">
    <location>
        <begin position="318"/>
        <end position="320"/>
    </location>
</feature>
<feature type="helix" evidence="19">
    <location>
        <begin position="322"/>
        <end position="335"/>
    </location>
</feature>
<feature type="helix" evidence="19">
    <location>
        <begin position="340"/>
        <end position="354"/>
    </location>
</feature>
<feature type="helix" evidence="19">
    <location>
        <begin position="357"/>
        <end position="367"/>
    </location>
</feature>
<feature type="helix" evidence="19">
    <location>
        <begin position="370"/>
        <end position="386"/>
    </location>
</feature>
<feature type="helix" evidence="19">
    <location>
        <begin position="390"/>
        <end position="398"/>
    </location>
</feature>
<feature type="helix" evidence="18">
    <location>
        <begin position="442"/>
        <end position="461"/>
    </location>
</feature>
<feature type="helix" evidence="18">
    <location>
        <begin position="465"/>
        <end position="477"/>
    </location>
</feature>
<feature type="helix" evidence="18">
    <location>
        <begin position="484"/>
        <end position="501"/>
    </location>
</feature>
<feature type="helix" evidence="18">
    <location>
        <begin position="504"/>
        <end position="520"/>
    </location>
</feature>
<feature type="helix" evidence="18">
    <location>
        <begin position="524"/>
        <end position="540"/>
    </location>
</feature>
<feature type="helix" evidence="18">
    <location>
        <begin position="544"/>
        <end position="560"/>
    </location>
</feature>
<feature type="helix" evidence="18">
    <location>
        <begin position="568"/>
        <end position="582"/>
    </location>
</feature>
<feature type="helix" evidence="18">
    <location>
        <begin position="586"/>
        <end position="599"/>
    </location>
</feature>
<feature type="turn" evidence="18">
    <location>
        <begin position="600"/>
        <end position="602"/>
    </location>
</feature>
<feature type="helix" evidence="18">
    <location>
        <begin position="605"/>
        <end position="608"/>
    </location>
</feature>
<feature type="helix" evidence="18">
    <location>
        <begin position="609"/>
        <end position="622"/>
    </location>
</feature>
<feature type="helix" evidence="18">
    <location>
        <begin position="625"/>
        <end position="639"/>
    </location>
</feature>
<feature type="helix" evidence="18">
    <location>
        <begin position="646"/>
        <end position="662"/>
    </location>
</feature>
<feature type="helix" evidence="18">
    <location>
        <begin position="666"/>
        <end position="675"/>
    </location>
</feature>
<feature type="helix" evidence="18">
    <location>
        <begin position="685"/>
        <end position="687"/>
    </location>
</feature>
<feature type="helix" evidence="18">
    <location>
        <begin position="688"/>
        <end position="700"/>
    </location>
</feature>
<feature type="helix" evidence="18">
    <location>
        <begin position="704"/>
        <end position="720"/>
    </location>
</feature>
<feature type="helix" evidence="18">
    <location>
        <begin position="724"/>
        <end position="741"/>
    </location>
</feature>
<feature type="helix" evidence="18">
    <location>
        <begin position="744"/>
        <end position="761"/>
    </location>
</feature>
<feature type="helix" evidence="18">
    <location>
        <begin position="765"/>
        <end position="768"/>
    </location>
</feature>
<feature type="helix" evidence="18">
    <location>
        <begin position="771"/>
        <end position="783"/>
    </location>
</feature>
<feature type="helix" evidence="18">
    <location>
        <begin position="789"/>
        <end position="802"/>
    </location>
</feature>
<protein>
    <recommendedName>
        <fullName evidence="1 15">HTH-type transcriptional regulator MalT</fullName>
    </recommendedName>
    <alternativeName>
        <fullName evidence="1 13">ATP-dependent transcriptional activator MalT</fullName>
    </alternativeName>
</protein>
<evidence type="ECO:0000255" key="1">
    <source>
        <dbReference type="HAMAP-Rule" id="MF_01247"/>
    </source>
</evidence>
<evidence type="ECO:0000269" key="2">
    <source>
    </source>
</evidence>
<evidence type="ECO:0000269" key="3">
    <source>
    </source>
</evidence>
<evidence type="ECO:0000269" key="4">
    <source>
    </source>
</evidence>
<evidence type="ECO:0000269" key="5">
    <source>
    </source>
</evidence>
<evidence type="ECO:0000269" key="6">
    <source>
    </source>
</evidence>
<evidence type="ECO:0000269" key="7">
    <source>
    </source>
</evidence>
<evidence type="ECO:0000269" key="8">
    <source>
    </source>
</evidence>
<evidence type="ECO:0000269" key="9">
    <source>
    </source>
</evidence>
<evidence type="ECO:0000269" key="10">
    <source>
    </source>
</evidence>
<evidence type="ECO:0000269" key="11">
    <source>
    </source>
</evidence>
<evidence type="ECO:0000269" key="12">
    <source>
    </source>
</evidence>
<evidence type="ECO:0000303" key="13">
    <source>
    </source>
</evidence>
<evidence type="ECO:0000303" key="14">
    <source>
    </source>
</evidence>
<evidence type="ECO:0000305" key="15"/>
<evidence type="ECO:0000305" key="16">
    <source>
    </source>
</evidence>
<evidence type="ECO:0000305" key="17">
    <source>
    </source>
</evidence>
<evidence type="ECO:0007829" key="18">
    <source>
        <dbReference type="PDB" id="1HZ4"/>
    </source>
</evidence>
<evidence type="ECO:0007829" key="19">
    <source>
        <dbReference type="PDB" id="8BOB"/>
    </source>
</evidence>
<name>MALT_ECOLI</name>
<organism>
    <name type="scientific">Escherichia coli (strain K12)</name>
    <dbReference type="NCBI Taxonomy" id="83333"/>
    <lineage>
        <taxon>Bacteria</taxon>
        <taxon>Pseudomonadati</taxon>
        <taxon>Pseudomonadota</taxon>
        <taxon>Gammaproteobacteria</taxon>
        <taxon>Enterobacterales</taxon>
        <taxon>Enterobacteriaceae</taxon>
        <taxon>Escherichia</taxon>
    </lineage>
</organism>
<keyword id="KW-0002">3D-structure</keyword>
<keyword id="KW-0010">Activator</keyword>
<keyword id="KW-0067">ATP-binding</keyword>
<keyword id="KW-0119">Carbohydrate metabolism</keyword>
<keyword id="KW-0238">DNA-binding</keyword>
<keyword id="KW-0547">Nucleotide-binding</keyword>
<keyword id="KW-1185">Reference proteome</keyword>
<keyword id="KW-0804">Transcription</keyword>
<keyword id="KW-0805">Transcription regulation</keyword>
<reference key="1">
    <citation type="journal article" date="1986" name="Gene">
        <title>The nucleotide sequence of the malT gene encoding the positive regulator of the Escherichia coli maltose regulon.</title>
        <authorList>
            <person name="Cole S.T."/>
            <person name="Raibaud O."/>
        </authorList>
    </citation>
    <scope>NUCLEOTIDE SEQUENCE [GENOMIC DNA]</scope>
    <source>
        <strain>K12</strain>
    </source>
</reference>
<reference key="2">
    <citation type="journal article" date="1997" name="Science">
        <title>The complete genome sequence of Escherichia coli K-12.</title>
        <authorList>
            <person name="Blattner F.R."/>
            <person name="Plunkett G. III"/>
            <person name="Bloch C.A."/>
            <person name="Perna N.T."/>
            <person name="Burland V."/>
            <person name="Riley M."/>
            <person name="Collado-Vides J."/>
            <person name="Glasner J.D."/>
            <person name="Rode C.K."/>
            <person name="Mayhew G.F."/>
            <person name="Gregor J."/>
            <person name="Davis N.W."/>
            <person name="Kirkpatrick H.A."/>
            <person name="Goeden M.A."/>
            <person name="Rose D.J."/>
            <person name="Mau B."/>
            <person name="Shao Y."/>
        </authorList>
    </citation>
    <scope>NUCLEOTIDE SEQUENCE [LARGE SCALE GENOMIC DNA]</scope>
    <source>
        <strain>K12 / MG1655 / ATCC 47076</strain>
    </source>
</reference>
<reference key="3">
    <citation type="journal article" date="2006" name="Mol. Syst. Biol.">
        <title>Highly accurate genome sequences of Escherichia coli K-12 strains MG1655 and W3110.</title>
        <authorList>
            <person name="Hayashi K."/>
            <person name="Morooka N."/>
            <person name="Yamamoto Y."/>
            <person name="Fujita K."/>
            <person name="Isono K."/>
            <person name="Choi S."/>
            <person name="Ohtsubo E."/>
            <person name="Baba T."/>
            <person name="Wanner B.L."/>
            <person name="Mori H."/>
            <person name="Horiuchi T."/>
        </authorList>
    </citation>
    <scope>NUCLEOTIDE SEQUENCE [LARGE SCALE GENOMIC DNA]</scope>
    <source>
        <strain>K12 / W3110 / ATCC 27325 / DSM 5911</strain>
    </source>
</reference>
<reference key="4">
    <citation type="journal article" date="1982" name="Mol. Gen. Genet.">
        <title>A DNA sequence containing the control sites for gene malT and for the malPQ operon.</title>
        <authorList>
            <person name="Debarbouille M."/>
            <person name="Cossart P."/>
            <person name="Raibaud O."/>
        </authorList>
    </citation>
    <scope>NUCLEOTIDE SEQUENCE [GENOMIC DNA] OF 1-9</scope>
</reference>
<reference key="5">
    <citation type="journal article" date="1982" name="J. Bacteriol.">
        <title>Role of the catabolite activator protein in the maltose regulon of Escherichia coli.</title>
        <authorList>
            <person name="Chapon C."/>
        </authorList>
    </citation>
    <scope>FUNCTION</scope>
    <scope>INDUCTION</scope>
    <source>
        <strain>K12</strain>
    </source>
</reference>
<reference key="6">
    <citation type="journal article" date="1987" name="J. Biol. Chem.">
        <title>Purification and properties of the MalT protein, the transcription activator of the Escherichia coli maltose regulon.</title>
        <authorList>
            <person name="Richet E."/>
            <person name="Raibaud O."/>
        </authorList>
    </citation>
    <scope>FUNCTION</scope>
    <scope>ATP-BINDING</scope>
    <scope>ACTIVITY REGULATION</scope>
    <scope>SUBUNIT</scope>
</reference>
<reference key="7">
    <citation type="journal article" date="1989" name="EMBO J.">
        <title>MalT, the regulatory protein of the Escherichia coli maltose system, is an ATP-dependent transcriptional activator.</title>
        <authorList>
            <person name="Richer E."/>
            <person name="Raibaud O."/>
        </authorList>
    </citation>
    <scope>FUNCTION</scope>
    <scope>ATP-BINDING</scope>
    <scope>ACTIVITY REGULATION</scope>
</reference>
<reference key="8">
    <citation type="journal article" date="1989" name="J. Mol. Biol.">
        <title>A complex nucleoprotein structure involved in activation of transcription of two divergent Escherichia coli promoters.</title>
        <authorList>
            <person name="Raibaud O."/>
            <person name="Vidal-Ingigliardi D."/>
            <person name="Richet E."/>
        </authorList>
    </citation>
    <scope>FUNCTION</scope>
    <scope>DNA-BINDING</scope>
    <source>
        <strain>K12 / MC4100 / ATCC 35695 / DSM 6574</strain>
    </source>
</reference>
<reference key="9">
    <citation type="journal article" date="1998" name="Mol. Microbiol.">
        <title>Negative transcriptional regulation of a positive regulator: the expression of malT, encoding the transcriptional activator of the maltose regulon of Escherichia coli, is negatively controlled by Mlc.</title>
        <authorList>
            <person name="Decker K."/>
            <person name="Plumbridge J."/>
            <person name="Boos W."/>
        </authorList>
    </citation>
    <scope>INDUCTION</scope>
    <source>
        <strain>K12 / MC4100 / ATCC 35695 / DSM 6574</strain>
    </source>
</reference>
<reference key="10">
    <citation type="journal article" date="1998" name="Mol. Microbiol.">
        <title>The ATP-binding cassette subunit of the maltose transporter MalK antagonizes MalT, the activator of the Escherichia coli mal regulon.</title>
        <authorList>
            <person name="Panagiotidis C.H."/>
            <person name="Boos W."/>
            <person name="Shuman H.A."/>
        </authorList>
    </citation>
    <scope>INTERACTION WITH MALK</scope>
    <scope>ACTIVITY REGULATION</scope>
</reference>
<reference key="11">
    <citation type="journal article" date="1999" name="J. Biol. Chem.">
        <title>Self-association of the Escherichia coli transcription activator MalT in the presence of maltotriose and ATP.</title>
        <authorList>
            <person name="Schreiber V."/>
            <person name="Richet E."/>
        </authorList>
    </citation>
    <scope>SUBUNIT</scope>
</reference>
<reference key="12">
    <citation type="journal article" date="2000" name="Mol. Microbiol.">
        <title>A new mechanism for the control of a prokaryotic transcriptional regulator: antagonistic binding of positive and negative effectors.</title>
        <authorList>
            <person name="Schreiber V."/>
            <person name="Steegborn C."/>
            <person name="Clausen T."/>
            <person name="Boos W."/>
            <person name="Richet E."/>
        </authorList>
    </citation>
    <scope>INTERACTION WITH MALY</scope>
    <scope>ACTIVITY REGULATION</scope>
</reference>
<reference key="13">
    <citation type="journal article" date="2002" name="J. Bacteriol.">
        <title>The N-terminus of the Escherichia coli transcription activator MalT is the domain of interaction with MalY.</title>
        <authorList>
            <person name="Schlegel A."/>
            <person name="Danot O."/>
            <person name="Richet E."/>
            <person name="Ferenci T."/>
            <person name="Boos W."/>
        </authorList>
    </citation>
    <scope>DOMAINS OF INTERACTION WITH REPRESSORS</scope>
</reference>
<reference key="14">
    <citation type="journal article" date="2002" name="J. Biol. Chem.">
        <title>The Aes protein directly controls the activity of MalT, the central transcriptional activator of the Escherichia coli maltose regulon.</title>
        <authorList>
            <person name="Joly N."/>
            <person name="Danot O."/>
            <person name="Schlegel A."/>
            <person name="Boos W."/>
            <person name="Richet E."/>
        </authorList>
    </citation>
    <scope>INTERACTION WITH AES</scope>
    <scope>ACTIVITY REGULATION</scope>
</reference>
<reference key="15">
    <citation type="journal article" date="2001" name="Structure">
        <title>Crystal structure of transcription factor MalT domain III: a novel helix repeat fold implicated in regulated oligomerization.</title>
        <authorList>
            <person name="Steegborn C."/>
            <person name="Danot O."/>
            <person name="Huber R."/>
            <person name="Clausen T."/>
        </authorList>
    </citation>
    <scope>X-RAY CRYSTALLOGRAPHY (1.45 ANGSTROMS) OF 437-806</scope>
    <scope>DOMAIN</scope>
</reference>
<proteinExistence type="evidence at protein level"/>
<dbReference type="EMBL" id="M13585">
    <property type="protein sequence ID" value="AAA83888.1"/>
    <property type="molecule type" value="Genomic_DNA"/>
</dbReference>
<dbReference type="EMBL" id="U18997">
    <property type="protein sequence ID" value="AAA58216.1"/>
    <property type="status" value="ALT_SEQ"/>
    <property type="molecule type" value="Genomic_DNA"/>
</dbReference>
<dbReference type="EMBL" id="U00096">
    <property type="protein sequence ID" value="AAC76443.1"/>
    <property type="molecule type" value="Genomic_DNA"/>
</dbReference>
<dbReference type="EMBL" id="AP009048">
    <property type="protein sequence ID" value="BAE77873.1"/>
    <property type="molecule type" value="Genomic_DNA"/>
</dbReference>
<dbReference type="EMBL" id="M24342">
    <property type="protein sequence ID" value="AAA24107.2"/>
    <property type="molecule type" value="Genomic_DNA"/>
</dbReference>
<dbReference type="EMBL" id="V00304">
    <property type="protein sequence ID" value="CAA23583.1"/>
    <property type="molecule type" value="Genomic_DNA"/>
</dbReference>
<dbReference type="EMBL" id="X02003">
    <property type="protein sequence ID" value="CAA26034.1"/>
    <property type="molecule type" value="Genomic_DNA"/>
</dbReference>
<dbReference type="PIR" id="E65137">
    <property type="entry name" value="RGECMT"/>
</dbReference>
<dbReference type="RefSeq" id="NP_417877.1">
    <property type="nucleotide sequence ID" value="NC_000913.3"/>
</dbReference>
<dbReference type="RefSeq" id="WP_000906961.1">
    <property type="nucleotide sequence ID" value="NZ_SSZK01000008.1"/>
</dbReference>
<dbReference type="PDB" id="1HZ4">
    <property type="method" value="X-ray"/>
    <property type="resolution" value="1.45 A"/>
    <property type="chains" value="A=437-806"/>
</dbReference>
<dbReference type="PDB" id="8BOB">
    <property type="method" value="EM"/>
    <property type="resolution" value="2.94 A"/>
    <property type="chains" value="C/D=1-409"/>
</dbReference>
<dbReference type="PDBsum" id="1HZ4"/>
<dbReference type="PDBsum" id="8BOB"/>
<dbReference type="SMR" id="P06993"/>
<dbReference type="BioGRID" id="4261189">
    <property type="interactions" value="106"/>
</dbReference>
<dbReference type="BioGRID" id="852230">
    <property type="interactions" value="16"/>
</dbReference>
<dbReference type="ComplexPortal" id="CPX-8282">
    <property type="entry name" value="MalT-MalY transcriptional regulator complex"/>
</dbReference>
<dbReference type="ComplexPortal" id="CPX-8283">
    <property type="entry name" value="MalT transcriptional activator complex"/>
</dbReference>
<dbReference type="DIP" id="DIP-10149N"/>
<dbReference type="FunCoup" id="P06993">
    <property type="interactions" value="236"/>
</dbReference>
<dbReference type="IntAct" id="P06993">
    <property type="interactions" value="31"/>
</dbReference>
<dbReference type="STRING" id="511145.b3418"/>
<dbReference type="jPOST" id="P06993"/>
<dbReference type="PaxDb" id="511145-b3418"/>
<dbReference type="EnsemblBacteria" id="AAC76443">
    <property type="protein sequence ID" value="AAC76443"/>
    <property type="gene ID" value="b3418"/>
</dbReference>
<dbReference type="GeneID" id="947921"/>
<dbReference type="KEGG" id="ecj:JW3381"/>
<dbReference type="KEGG" id="eco:b3418"/>
<dbReference type="KEGG" id="ecoc:C3026_18540"/>
<dbReference type="PATRIC" id="fig|1411691.4.peg.3310"/>
<dbReference type="EchoBASE" id="EB0557"/>
<dbReference type="eggNOG" id="COG2909">
    <property type="taxonomic scope" value="Bacteria"/>
</dbReference>
<dbReference type="HOGENOM" id="CLU_006325_3_0_6"/>
<dbReference type="InParanoid" id="P06993"/>
<dbReference type="OMA" id="SDWVSNA"/>
<dbReference type="OrthoDB" id="1123107at2"/>
<dbReference type="PhylomeDB" id="P06993"/>
<dbReference type="BioCyc" id="EcoCyc:PD00237"/>
<dbReference type="BioCyc" id="MetaCyc:PD00237"/>
<dbReference type="EvolutionaryTrace" id="P06993"/>
<dbReference type="PRO" id="PR:P06993"/>
<dbReference type="Proteomes" id="UP000000625">
    <property type="component" value="Chromosome"/>
</dbReference>
<dbReference type="GO" id="GO:0005524">
    <property type="term" value="F:ATP binding"/>
    <property type="evidence" value="ECO:0007669"/>
    <property type="project" value="UniProtKB-UniRule"/>
</dbReference>
<dbReference type="GO" id="GO:0003677">
    <property type="term" value="F:DNA binding"/>
    <property type="evidence" value="ECO:0007669"/>
    <property type="project" value="UniProtKB-KW"/>
</dbReference>
<dbReference type="GO" id="GO:0003700">
    <property type="term" value="F:DNA-binding transcription factor activity"/>
    <property type="evidence" value="ECO:0007669"/>
    <property type="project" value="UniProtKB-UniRule"/>
</dbReference>
<dbReference type="GO" id="GO:0042802">
    <property type="term" value="F:identical protein binding"/>
    <property type="evidence" value="ECO:0000353"/>
    <property type="project" value="IntAct"/>
</dbReference>
<dbReference type="GO" id="GO:0048031">
    <property type="term" value="F:trisaccharide binding"/>
    <property type="evidence" value="ECO:0000315"/>
    <property type="project" value="EcoCyc"/>
</dbReference>
<dbReference type="GO" id="GO:0045913">
    <property type="term" value="P:positive regulation of carbohydrate metabolic process"/>
    <property type="evidence" value="ECO:0007669"/>
    <property type="project" value="UniProtKB-UniRule"/>
</dbReference>
<dbReference type="GO" id="GO:0045893">
    <property type="term" value="P:positive regulation of DNA-templated transcription"/>
    <property type="evidence" value="ECO:0007669"/>
    <property type="project" value="UniProtKB-UniRule"/>
</dbReference>
<dbReference type="CDD" id="cd06170">
    <property type="entry name" value="LuxR_C_like"/>
    <property type="match status" value="1"/>
</dbReference>
<dbReference type="FunFam" id="1.10.10.10:FF:000115">
    <property type="entry name" value="HTH-type transcriptional regulator MalT"/>
    <property type="match status" value="1"/>
</dbReference>
<dbReference type="FunFam" id="1.25.40.10:FF:000086">
    <property type="entry name" value="HTH-type transcriptional regulator MalT"/>
    <property type="match status" value="1"/>
</dbReference>
<dbReference type="Gene3D" id="3.40.50.300">
    <property type="entry name" value="P-loop containing nucleotide triphosphate hydrolases"/>
    <property type="match status" value="1"/>
</dbReference>
<dbReference type="Gene3D" id="1.25.40.10">
    <property type="entry name" value="Tetratricopeptide repeat domain"/>
    <property type="match status" value="1"/>
</dbReference>
<dbReference type="Gene3D" id="1.10.10.10">
    <property type="entry name" value="Winged helix-like DNA-binding domain superfamily/Winged helix DNA-binding domain"/>
    <property type="match status" value="1"/>
</dbReference>
<dbReference type="HAMAP" id="MF_01247">
    <property type="entry name" value="HTH_type_MalT"/>
    <property type="match status" value="1"/>
</dbReference>
<dbReference type="InterPro" id="IPR027417">
    <property type="entry name" value="P-loop_NTPase"/>
</dbReference>
<dbReference type="InterPro" id="IPR016032">
    <property type="entry name" value="Sig_transdc_resp-reg_C-effctor"/>
</dbReference>
<dbReference type="InterPro" id="IPR011990">
    <property type="entry name" value="TPR-like_helical_dom_sf"/>
</dbReference>
<dbReference type="InterPro" id="IPR041617">
    <property type="entry name" value="TPR_MalT"/>
</dbReference>
<dbReference type="InterPro" id="IPR023768">
    <property type="entry name" value="Tscrpt_reg_HTH_MalT"/>
</dbReference>
<dbReference type="InterPro" id="IPR000792">
    <property type="entry name" value="Tscrpt_reg_LuxR_C"/>
</dbReference>
<dbReference type="InterPro" id="IPR036388">
    <property type="entry name" value="WH-like_DNA-bd_sf"/>
</dbReference>
<dbReference type="NCBIfam" id="NF003420">
    <property type="entry name" value="PRK04841.1"/>
    <property type="match status" value="1"/>
</dbReference>
<dbReference type="PANTHER" id="PTHR44688">
    <property type="entry name" value="DNA-BINDING TRANSCRIPTIONAL ACTIVATOR DEVR_DOSR"/>
    <property type="match status" value="1"/>
</dbReference>
<dbReference type="PANTHER" id="PTHR44688:SF16">
    <property type="entry name" value="DNA-BINDING TRANSCRIPTIONAL ACTIVATOR DEVR_DOSR"/>
    <property type="match status" value="1"/>
</dbReference>
<dbReference type="Pfam" id="PF00196">
    <property type="entry name" value="GerE"/>
    <property type="match status" value="1"/>
</dbReference>
<dbReference type="Pfam" id="PF17874">
    <property type="entry name" value="TPR_MalT"/>
    <property type="match status" value="1"/>
</dbReference>
<dbReference type="PRINTS" id="PR00038">
    <property type="entry name" value="HTHLUXR"/>
</dbReference>
<dbReference type="SMART" id="SM00421">
    <property type="entry name" value="HTH_LUXR"/>
    <property type="match status" value="1"/>
</dbReference>
<dbReference type="SUPFAM" id="SSF46894">
    <property type="entry name" value="C-terminal effector domain of the bipartite response regulators"/>
    <property type="match status" value="1"/>
</dbReference>
<dbReference type="SUPFAM" id="SSF52540">
    <property type="entry name" value="P-loop containing nucleoside triphosphate hydrolases"/>
    <property type="match status" value="1"/>
</dbReference>
<dbReference type="SUPFAM" id="SSF48452">
    <property type="entry name" value="TPR-like"/>
    <property type="match status" value="1"/>
</dbReference>
<dbReference type="PROSITE" id="PS00622">
    <property type="entry name" value="HTH_LUXR_1"/>
    <property type="match status" value="1"/>
</dbReference>
<dbReference type="PROSITE" id="PS50043">
    <property type="entry name" value="HTH_LUXR_2"/>
    <property type="match status" value="1"/>
</dbReference>
<gene>
    <name evidence="1 14" type="primary">malT</name>
    <name type="synonym">malA</name>
    <name type="ordered locus">b3418</name>
    <name type="ordered locus">JW3381</name>
</gene>
<sequence length="901" mass="103118">MLIPSKLSRPVRLDHTVVRERLLAKLSGANNFRLALITSPAGYGKTTLISQWAAGKNDIGWYSLDEGDNQQERFASYLIAAVQQATNGHCAICETMAQKRQYASLTSLFAQLFIELAEWHSPLYLVIDDYHLITNPVIHESMRFFIRHQPENLTLVVLSRNLPQLGIANLRVRDQLLEIGSQQLAFTHQEAKQFFDCRLSSPIEAAESSRICDDVSGWATALQLIALSARQNTHSAHKSARRLAGINASHLSDYLVDEVLDNVDLATRHFLLKSAILRSMNDALITRVTGEENGQMRLEEIERQGLFLQRMDDTGEWFCYHPLFGNFLRQRCQWELAAELPEIHRAAAESWMAQGFPSEAIHHALAAGDALMLRDILLNHAWSLFNHSELSLLEESLKALPWDSLLENPQLVLLQAWLMQSQHRYGEVNTLLARAEHEIKDIREDTMHAEFNALRAQVAINDGNPDEAERLAKLALEELPPGWFYSRIVATSVLGEVLHCKGELTRSLALMQQTEQMARQHDVWHYALWSLIQQSEILFAQGFLQTAWETQEKAFQLINEQHLEQLPMHEFLVRIRAQLLWAWARLDEAEASARSGIEVLSSYQPQQQLQCLAMLIQCSLARGDLDNARSQLNRLENLLGNGKYHSDWISNANKVRVIYWQMTGDKAAAANWLRHTAKPEFANNHFLQGQWRNIARAQILLGEFEPAEIVLEELNENARSLRLMSDLNRNLLLLNQLYWQAGRKSDAQRVLLDALKLANRTGFISHFVIEGEAMAQQLRQLIQLNTLPELEQHRAQRILREINQHHRHKFAHFDENFVERLLNHPEVPELIRTSPLTQREWQVLGLIYSGYSNEQIAGELEVAATTIKTHIRNLYQKLGVAHRQDAVQHAQQLLKMMGYGV</sequence>
<accession>P06993</accession>
<accession>Q2M783</accession>